<comment type="function">
    <text evidence="1">Catalyzes the exchange of L-carnitine for gamma-butyrobetaine.</text>
</comment>
<comment type="catalytic activity">
    <reaction evidence="1">
        <text>4-(trimethylamino)butanoate(in) + (R)-carnitine(out) = 4-(trimethylamino)butanoate(out) + (R)-carnitine(in)</text>
        <dbReference type="Rhea" id="RHEA:29427"/>
        <dbReference type="ChEBI" id="CHEBI:16244"/>
        <dbReference type="ChEBI" id="CHEBI:16347"/>
    </reaction>
</comment>
<comment type="pathway">
    <text evidence="1">Amine and polyamine metabolism; carnitine metabolism.</text>
</comment>
<comment type="subunit">
    <text evidence="1">Homotrimer.</text>
</comment>
<comment type="subcellular location">
    <subcellularLocation>
        <location evidence="1">Cell inner membrane</location>
        <topology evidence="1">Multi-pass membrane protein</topology>
    </subcellularLocation>
</comment>
<comment type="similarity">
    <text evidence="1">Belongs to the BCCT transporter (TC 2.A.15) family. CaiT subfamily.</text>
</comment>
<reference key="1">
    <citation type="journal article" date="2009" name="PLoS ONE">
        <title>Salmonella paratyphi C: genetic divergence from Salmonella choleraesuis and pathogenic convergence with Salmonella typhi.</title>
        <authorList>
            <person name="Liu W.-Q."/>
            <person name="Feng Y."/>
            <person name="Wang Y."/>
            <person name="Zou Q.-H."/>
            <person name="Chen F."/>
            <person name="Guo J.-T."/>
            <person name="Peng Y.-H."/>
            <person name="Jin Y."/>
            <person name="Li Y.-G."/>
            <person name="Hu S.-N."/>
            <person name="Johnston R.N."/>
            <person name="Liu G.-R."/>
            <person name="Liu S.-L."/>
        </authorList>
    </citation>
    <scope>NUCLEOTIDE SEQUENCE [LARGE SCALE GENOMIC DNA]</scope>
    <source>
        <strain>RKS4594</strain>
    </source>
</reference>
<feature type="chain" id="PRO_1000149621" description="L-carnitine/gamma-butyrobetaine antiporter">
    <location>
        <begin position="1"/>
        <end position="505"/>
    </location>
</feature>
<feature type="transmembrane region" description="Helical" evidence="1">
    <location>
        <begin position="10"/>
        <end position="30"/>
    </location>
</feature>
<feature type="transmembrane region" description="Helical" evidence="1">
    <location>
        <begin position="51"/>
        <end position="71"/>
    </location>
</feature>
<feature type="transmembrane region" description="Helical" evidence="1">
    <location>
        <begin position="92"/>
        <end position="112"/>
    </location>
</feature>
<feature type="transmembrane region" description="Helical" evidence="1">
    <location>
        <begin position="143"/>
        <end position="163"/>
    </location>
</feature>
<feature type="transmembrane region" description="Helical" evidence="1">
    <location>
        <begin position="195"/>
        <end position="215"/>
    </location>
</feature>
<feature type="transmembrane region" description="Helical" evidence="1">
    <location>
        <begin position="231"/>
        <end position="251"/>
    </location>
</feature>
<feature type="transmembrane region" description="Helical" evidence="1">
    <location>
        <begin position="263"/>
        <end position="283"/>
    </location>
</feature>
<feature type="transmembrane region" description="Helical" evidence="1">
    <location>
        <begin position="316"/>
        <end position="336"/>
    </location>
</feature>
<feature type="transmembrane region" description="Helical" evidence="1">
    <location>
        <begin position="347"/>
        <end position="367"/>
    </location>
</feature>
<feature type="transmembrane region" description="Helical" evidence="1">
    <location>
        <begin position="403"/>
        <end position="423"/>
    </location>
</feature>
<feature type="transmembrane region" description="Helical" evidence="1">
    <location>
        <begin position="446"/>
        <end position="466"/>
    </location>
</feature>
<feature type="transmembrane region" description="Helical" evidence="1">
    <location>
        <begin position="475"/>
        <end position="495"/>
    </location>
</feature>
<keyword id="KW-0050">Antiport</keyword>
<keyword id="KW-0997">Cell inner membrane</keyword>
<keyword id="KW-1003">Cell membrane</keyword>
<keyword id="KW-0472">Membrane</keyword>
<keyword id="KW-0812">Transmembrane</keyword>
<keyword id="KW-1133">Transmembrane helix</keyword>
<keyword id="KW-0813">Transport</keyword>
<dbReference type="EMBL" id="CP000857">
    <property type="protein sequence ID" value="ACN44271.1"/>
    <property type="molecule type" value="Genomic_DNA"/>
</dbReference>
<dbReference type="RefSeq" id="WP_000787073.1">
    <property type="nucleotide sequence ID" value="NC_012125.1"/>
</dbReference>
<dbReference type="SMR" id="C0Q4L6"/>
<dbReference type="KEGG" id="sei:SPC_0079"/>
<dbReference type="HOGENOM" id="CLU_010118_6_0_6"/>
<dbReference type="UniPathway" id="UPA00117"/>
<dbReference type="Proteomes" id="UP000001599">
    <property type="component" value="Chromosome"/>
</dbReference>
<dbReference type="GO" id="GO:0005886">
    <property type="term" value="C:plasma membrane"/>
    <property type="evidence" value="ECO:0007669"/>
    <property type="project" value="UniProtKB-SubCell"/>
</dbReference>
<dbReference type="GO" id="GO:0044667">
    <property type="term" value="F:(R)-carnitine:4-(trimethylammonio)butanoate antiporter activity"/>
    <property type="evidence" value="ECO:0007669"/>
    <property type="project" value="UniProtKB-UniRule"/>
</dbReference>
<dbReference type="GO" id="GO:1900751">
    <property type="term" value="P:4-(trimethylammonio)butanoate transport"/>
    <property type="evidence" value="ECO:0007669"/>
    <property type="project" value="InterPro"/>
</dbReference>
<dbReference type="GO" id="GO:0009437">
    <property type="term" value="P:carnitine metabolic process"/>
    <property type="evidence" value="ECO:0007669"/>
    <property type="project" value="UniProtKB-UniRule"/>
</dbReference>
<dbReference type="HAMAP" id="MF_01049">
    <property type="entry name" value="CaiT"/>
    <property type="match status" value="1"/>
</dbReference>
<dbReference type="InterPro" id="IPR018093">
    <property type="entry name" value="BCCT_CS"/>
</dbReference>
<dbReference type="InterPro" id="IPR000060">
    <property type="entry name" value="BCCT_transptr"/>
</dbReference>
<dbReference type="InterPro" id="IPR023449">
    <property type="entry name" value="BCCT_transptr_CaiT"/>
</dbReference>
<dbReference type="NCBIfam" id="TIGR00842">
    <property type="entry name" value="bcct"/>
    <property type="match status" value="1"/>
</dbReference>
<dbReference type="NCBIfam" id="NF002887">
    <property type="entry name" value="PRK03356.1"/>
    <property type="match status" value="1"/>
</dbReference>
<dbReference type="PANTHER" id="PTHR30047">
    <property type="entry name" value="HIGH-AFFINITY CHOLINE TRANSPORT PROTEIN-RELATED"/>
    <property type="match status" value="1"/>
</dbReference>
<dbReference type="PANTHER" id="PTHR30047:SF11">
    <property type="entry name" value="L-CARNITINE_GAMMA-BUTYROBETAINE ANTIPORTER"/>
    <property type="match status" value="1"/>
</dbReference>
<dbReference type="Pfam" id="PF02028">
    <property type="entry name" value="BCCT"/>
    <property type="match status" value="1"/>
</dbReference>
<dbReference type="PROSITE" id="PS01303">
    <property type="entry name" value="BCCT"/>
    <property type="match status" value="1"/>
</dbReference>
<evidence type="ECO:0000255" key="1">
    <source>
        <dbReference type="HAMAP-Rule" id="MF_01049"/>
    </source>
</evidence>
<accession>C0Q4L6</accession>
<sequence length="505" mass="56643">MKNEKKKSGIEPKVFFPPLIIVGILCWLTVRDLDAANVVINAVFSYVTNVWGWAFEWYMVVMLFGWFWLVFGPYAKKRLGDEKPEFSTASWIFMMFASCTSAAVLFWGSIEIYYYISTPPFGLEPNSTGAKEIGLAYSLFHWGPLPWATYSFLSVAFAYFFFVRKMDVIRPSSTLVPLVGEKHAKGLFGTIVDNFYLVALIFAMGTSLGLATPLVTECMQWLFGIPHTLQLDAIIITCWIILNAICVACGLQKGVRIASDVRSYLSFLMLGWVFIVSGASFIMNYFTDSVGMLLMHLPRMLFYTDAIGKGGFPQGWTVFYWAWWVIYAIQMSIFLARISRGRTVRELCFGMVMGLTASTWILWTVLGSNTLLLMDKNILNIPQLIEQHGVARAIIETWAALPLSTATMWGFFILCFIATVTLINACSYTLAMSTCREVRDGEEPPLLVRIGWSVLVGIIGIVLLALGGLKPIQTAIIAGGCPLFFVNIMVTLSFIKDAKVHWKDK</sequence>
<gene>
    <name evidence="1" type="primary">caiT</name>
    <name type="ordered locus">SPC_0079</name>
</gene>
<proteinExistence type="inferred from homology"/>
<organism>
    <name type="scientific">Salmonella paratyphi C (strain RKS4594)</name>
    <dbReference type="NCBI Taxonomy" id="476213"/>
    <lineage>
        <taxon>Bacteria</taxon>
        <taxon>Pseudomonadati</taxon>
        <taxon>Pseudomonadota</taxon>
        <taxon>Gammaproteobacteria</taxon>
        <taxon>Enterobacterales</taxon>
        <taxon>Enterobacteriaceae</taxon>
        <taxon>Salmonella</taxon>
    </lineage>
</organism>
<name>CAIT_SALPC</name>
<protein>
    <recommendedName>
        <fullName evidence="1">L-carnitine/gamma-butyrobetaine antiporter</fullName>
    </recommendedName>
</protein>